<protein>
    <recommendedName>
        <fullName>Barley B recombinant-like protein D</fullName>
        <shortName>BBR-like protein D</shortName>
    </recommendedName>
    <alternativeName>
        <fullName>GAGA-binding transcriptional activator BBR-D</fullName>
    </alternativeName>
</protein>
<gene>
    <name type="ordered locus">Os06g0130600</name>
    <name type="ordered locus">LOC_Os06g04010</name>
    <name type="ORF">P0493C11.7</name>
</gene>
<sequence>MDNLGHRENGRQRPDQYKGLHTQWMMPQTQRHLKDHQSMNLLALMNDRDNAIRERDHALAEKKAAIAERDMAFTQRDAAMAERNAAVVERDNALAALELARTNGLNMNNGNGFPQGSLSGSKNIHHHDQLSHAQSSPLQLADSPYDHAREMHISEAYPISTAPGSAGKAKRPKKNSSQASPLKRPSGVLRKTKKPSGDWKNVGMSGCGDDSAHASVMKNEWKDQNLGLNQVAFDDSTMPAPACSCTGKLRQCYKWGNGGWQSSCCTMNISMYPLPVMPNKRHARMGGRKMSGGAFTKLLSRLAAEGHDLSTPVDLKDHWAKHGTNRYITIR</sequence>
<reference key="1">
    <citation type="journal article" date="2003" name="Plant J.">
        <title>The GA octodinucleotide repeat binding factor BBR participates in the transcriptional regulation of the homeobox gene Bkn3.</title>
        <authorList>
            <person name="Santi L."/>
            <person name="Wang Y."/>
            <person name="Stile M.R."/>
            <person name="Berendzen K.W."/>
            <person name="Wanke D."/>
            <person name="Roig C."/>
            <person name="Pozzi C."/>
            <person name="Mueller K."/>
            <person name="Mueller J."/>
            <person name="Rohde W."/>
            <person name="Salamini F."/>
        </authorList>
    </citation>
    <scope>NUCLEOTIDE SEQUENCE [GENOMIC DNA / MRNA]</scope>
</reference>
<reference key="2">
    <citation type="journal article" date="2005" name="Nature">
        <title>The map-based sequence of the rice genome.</title>
        <authorList>
            <consortium name="International rice genome sequencing project (IRGSP)"/>
        </authorList>
    </citation>
    <scope>NUCLEOTIDE SEQUENCE [LARGE SCALE GENOMIC DNA]</scope>
    <source>
        <strain>cv. Nipponbare</strain>
    </source>
</reference>
<reference key="3">
    <citation type="journal article" date="2008" name="Nucleic Acids Res.">
        <title>The rice annotation project database (RAP-DB): 2008 update.</title>
        <authorList>
            <consortium name="The rice annotation project (RAP)"/>
        </authorList>
    </citation>
    <scope>GENOME REANNOTATION</scope>
    <source>
        <strain>cv. Nipponbare</strain>
    </source>
</reference>
<reference key="4">
    <citation type="journal article" date="2013" name="Rice">
        <title>Improvement of the Oryza sativa Nipponbare reference genome using next generation sequence and optical map data.</title>
        <authorList>
            <person name="Kawahara Y."/>
            <person name="de la Bastide M."/>
            <person name="Hamilton J.P."/>
            <person name="Kanamori H."/>
            <person name="McCombie W.R."/>
            <person name="Ouyang S."/>
            <person name="Schwartz D.C."/>
            <person name="Tanaka T."/>
            <person name="Wu J."/>
            <person name="Zhou S."/>
            <person name="Childs K.L."/>
            <person name="Davidson R.M."/>
            <person name="Lin H."/>
            <person name="Quesada-Ocampo L."/>
            <person name="Vaillancourt B."/>
            <person name="Sakai H."/>
            <person name="Lee S.S."/>
            <person name="Kim J."/>
            <person name="Numa H."/>
            <person name="Itoh T."/>
            <person name="Buell C.R."/>
            <person name="Matsumoto T."/>
        </authorList>
    </citation>
    <scope>GENOME REANNOTATION</scope>
    <source>
        <strain>cv. Nipponbare</strain>
    </source>
</reference>
<reference key="5">
    <citation type="journal article" date="2003" name="Science">
        <title>Collection, mapping, and annotation of over 28,000 cDNA clones from japonica rice.</title>
        <authorList>
            <consortium name="The rice full-length cDNA consortium"/>
        </authorList>
    </citation>
    <scope>NUCLEOTIDE SEQUENCE [LARGE SCALE MRNA]</scope>
    <source>
        <strain>cv. Nipponbare</strain>
    </source>
</reference>
<reference key="6">
    <citation type="journal article" date="2011" name="PLoS ONE">
        <title>Alanine zipper-like coiled-coil domains are necessary for homotypic dimerization of plant GAGA-factors in the nucleus and nucleolus.</title>
        <authorList>
            <person name="Wanke D."/>
            <person name="Hohenstatt M.L."/>
            <person name="Dynowski M."/>
            <person name="Bloss U."/>
            <person name="Hecker A."/>
            <person name="Elgass K."/>
            <person name="Hummel S."/>
            <person name="Hahn A."/>
            <person name="Caesar K."/>
            <person name="Schleifenbaum F."/>
            <person name="Harter K."/>
            <person name="Berendzen K.W."/>
        </authorList>
    </citation>
    <scope>DOMAIN DIMERIZATION</scope>
</reference>
<name>BBRD_ORYSJ</name>
<evidence type="ECO:0000250" key="1"/>
<evidence type="ECO:0000255" key="2"/>
<evidence type="ECO:0000256" key="3">
    <source>
        <dbReference type="SAM" id="MobiDB-lite"/>
    </source>
</evidence>
<evidence type="ECO:0000269" key="4">
    <source>
    </source>
</evidence>
<evidence type="ECO:0000305" key="5"/>
<comment type="function">
    <text evidence="1">Transcriptional regulator that specifically binds to GA-rich elements (GAGA-repeats) present in regulatory sequences of genes involved in developmental processes.</text>
</comment>
<comment type="subunit">
    <text evidence="1">Homodimer. Heterodimer.</text>
</comment>
<comment type="subcellular location">
    <subcellularLocation>
        <location evidence="1">Nucleus</location>
    </subcellularLocation>
</comment>
<comment type="domain">
    <text evidence="4">Alanine-zipper domain is involved in homo- or hetero-dimerization via electrostatic interaction.</text>
</comment>
<comment type="similarity">
    <text evidence="5">Belongs to the BBR/BPC family.</text>
</comment>
<accession>Q5VSA8</accession>
<accession>A0A0P0WSI7</accession>
<proteinExistence type="evidence at transcript level"/>
<feature type="chain" id="PRO_0000413446" description="Barley B recombinant-like protein D">
    <location>
        <begin position="1"/>
        <end position="331"/>
    </location>
</feature>
<feature type="region of interest" description="Alanine-zipper">
    <location>
        <begin position="51"/>
        <end position="86"/>
    </location>
</feature>
<feature type="region of interest" description="Disordered" evidence="3">
    <location>
        <begin position="104"/>
        <end position="140"/>
    </location>
</feature>
<feature type="region of interest" description="Disordered" evidence="3">
    <location>
        <begin position="156"/>
        <end position="205"/>
    </location>
</feature>
<feature type="coiled-coil region" evidence="2">
    <location>
        <begin position="43"/>
        <end position="101"/>
    </location>
</feature>
<feature type="compositionally biased region" description="Polar residues" evidence="3">
    <location>
        <begin position="104"/>
        <end position="122"/>
    </location>
</feature>
<dbReference type="EMBL" id="AY957504">
    <property type="protein sequence ID" value="AAX59045.1"/>
    <property type="molecule type" value="Genomic_DNA"/>
</dbReference>
<dbReference type="EMBL" id="AY957505">
    <property type="protein sequence ID" value="AAX59046.1"/>
    <property type="molecule type" value="mRNA"/>
</dbReference>
<dbReference type="EMBL" id="AP000559">
    <property type="protein sequence ID" value="BAD67667.1"/>
    <property type="molecule type" value="Genomic_DNA"/>
</dbReference>
<dbReference type="EMBL" id="AP008212">
    <property type="protein sequence ID" value="BAF18605.1"/>
    <property type="molecule type" value="Genomic_DNA"/>
</dbReference>
<dbReference type="EMBL" id="AP014962">
    <property type="protein sequence ID" value="BAS95976.1"/>
    <property type="molecule type" value="Genomic_DNA"/>
</dbReference>
<dbReference type="EMBL" id="AK070616">
    <property type="protein sequence ID" value="BAG92056.1"/>
    <property type="molecule type" value="mRNA"/>
</dbReference>
<dbReference type="RefSeq" id="XP_015641153.1">
    <property type="nucleotide sequence ID" value="XM_015785667.1"/>
</dbReference>
<dbReference type="RefSeq" id="XP_015641154.1">
    <property type="nucleotide sequence ID" value="XM_015785668.1"/>
</dbReference>
<dbReference type="SMR" id="Q5VSA8"/>
<dbReference type="FunCoup" id="Q5VSA8">
    <property type="interactions" value="2464"/>
</dbReference>
<dbReference type="STRING" id="39947.Q5VSA8"/>
<dbReference type="PaxDb" id="39947-Q5VSA8"/>
<dbReference type="EnsemblPlants" id="Os06t0130600-01">
    <property type="protein sequence ID" value="Os06t0130600-01"/>
    <property type="gene ID" value="Os06g0130600"/>
</dbReference>
<dbReference type="Gramene" id="Os06t0130600-01">
    <property type="protein sequence ID" value="Os06t0130600-01"/>
    <property type="gene ID" value="Os06g0130600"/>
</dbReference>
<dbReference type="KEGG" id="dosa:Os06g0130600"/>
<dbReference type="eggNOG" id="ENOG502QSGE">
    <property type="taxonomic scope" value="Eukaryota"/>
</dbReference>
<dbReference type="HOGENOM" id="CLU_039119_0_0_1"/>
<dbReference type="InParanoid" id="Q5VSA8"/>
<dbReference type="OMA" id="REMHTTD"/>
<dbReference type="OrthoDB" id="1883964at2759"/>
<dbReference type="Proteomes" id="UP000000763">
    <property type="component" value="Chromosome 6"/>
</dbReference>
<dbReference type="Proteomes" id="UP000059680">
    <property type="component" value="Chromosome 6"/>
</dbReference>
<dbReference type="GO" id="GO:0005634">
    <property type="term" value="C:nucleus"/>
    <property type="evidence" value="ECO:0000318"/>
    <property type="project" value="GO_Central"/>
</dbReference>
<dbReference type="GO" id="GO:0003700">
    <property type="term" value="F:DNA-binding transcription factor activity"/>
    <property type="evidence" value="ECO:0000318"/>
    <property type="project" value="GO_Central"/>
</dbReference>
<dbReference type="GO" id="GO:0043565">
    <property type="term" value="F:sequence-specific DNA binding"/>
    <property type="evidence" value="ECO:0000318"/>
    <property type="project" value="GO_Central"/>
</dbReference>
<dbReference type="GO" id="GO:0009723">
    <property type="term" value="P:response to ethylene"/>
    <property type="evidence" value="ECO:0000318"/>
    <property type="project" value="GO_Central"/>
</dbReference>
<dbReference type="InterPro" id="IPR010409">
    <property type="entry name" value="GAGA-bd_tscrpt_act"/>
</dbReference>
<dbReference type="PANTHER" id="PTHR31421">
    <property type="entry name" value="PROTEIN BASIC PENTACYSTEINE3"/>
    <property type="match status" value="1"/>
</dbReference>
<dbReference type="PANTHER" id="PTHR31421:SF2">
    <property type="entry name" value="PROTEIN BASIC PENTACYSTEINE6"/>
    <property type="match status" value="1"/>
</dbReference>
<dbReference type="Pfam" id="PF06217">
    <property type="entry name" value="GAGA_bind"/>
    <property type="match status" value="1"/>
</dbReference>
<dbReference type="SMART" id="SM01226">
    <property type="entry name" value="GAGA_bind"/>
    <property type="match status" value="1"/>
</dbReference>
<organism>
    <name type="scientific">Oryza sativa subsp. japonica</name>
    <name type="common">Rice</name>
    <dbReference type="NCBI Taxonomy" id="39947"/>
    <lineage>
        <taxon>Eukaryota</taxon>
        <taxon>Viridiplantae</taxon>
        <taxon>Streptophyta</taxon>
        <taxon>Embryophyta</taxon>
        <taxon>Tracheophyta</taxon>
        <taxon>Spermatophyta</taxon>
        <taxon>Magnoliopsida</taxon>
        <taxon>Liliopsida</taxon>
        <taxon>Poales</taxon>
        <taxon>Poaceae</taxon>
        <taxon>BOP clade</taxon>
        <taxon>Oryzoideae</taxon>
        <taxon>Oryzeae</taxon>
        <taxon>Oryzinae</taxon>
        <taxon>Oryza</taxon>
        <taxon>Oryza sativa</taxon>
    </lineage>
</organism>
<keyword id="KW-0175">Coiled coil</keyword>
<keyword id="KW-0238">DNA-binding</keyword>
<keyword id="KW-0539">Nucleus</keyword>
<keyword id="KW-1185">Reference proteome</keyword>
<keyword id="KW-0804">Transcription</keyword>
<keyword id="KW-0805">Transcription regulation</keyword>